<sequence>MYLELVKKNSVILDKDGNKVKEVELPFIFSFPVRKDIIRRVFLAEFTHSLQPKGRDPMAGKRTSAESFGINLGMARVPRVKNSGEAALAPNTVGGRLTFPPSVDKKLVEEVNDKEKQLAVISALSATADKVFVKARGHVFKDSVSFPIVVTDDIVSLKTASEVEEFLEKIGVYDDVKRVKERIRIRAGKGKMRGRKYKESIGPLIIVHDSNSPIVKAARNIAGVDVVNAKDVSVIHLAPGAHSGRLTIYTETSIKILDERLSKRLVS</sequence>
<organism>
    <name type="scientific">Saccharolobus islandicus (strain Y.N.15.51 / Yellowstone #2)</name>
    <name type="common">Sulfolobus islandicus</name>
    <dbReference type="NCBI Taxonomy" id="419942"/>
    <lineage>
        <taxon>Archaea</taxon>
        <taxon>Thermoproteota</taxon>
        <taxon>Thermoprotei</taxon>
        <taxon>Sulfolobales</taxon>
        <taxon>Sulfolobaceae</taxon>
        <taxon>Saccharolobus</taxon>
    </lineage>
</organism>
<keyword id="KW-0687">Ribonucleoprotein</keyword>
<keyword id="KW-0689">Ribosomal protein</keyword>
<keyword id="KW-0694">RNA-binding</keyword>
<keyword id="KW-0699">rRNA-binding</keyword>
<reference key="1">
    <citation type="journal article" date="2009" name="Proc. Natl. Acad. Sci. U.S.A.">
        <title>Biogeography of the Sulfolobus islandicus pan-genome.</title>
        <authorList>
            <person name="Reno M.L."/>
            <person name="Held N.L."/>
            <person name="Fields C.J."/>
            <person name="Burke P.V."/>
            <person name="Whitaker R.J."/>
        </authorList>
    </citation>
    <scope>NUCLEOTIDE SEQUENCE [LARGE SCALE GENOMIC DNA]</scope>
    <source>
        <strain>Y.N.15.51 / Yellowstone #2</strain>
    </source>
</reference>
<gene>
    <name evidence="1" type="primary">rpl4</name>
    <name type="ordered locus">YN1551_1427</name>
</gene>
<comment type="function">
    <text evidence="1">One of the primary rRNA binding proteins, this protein initially binds near the 5'-end of the 23S rRNA. It is important during the early stages of 50S assembly. It makes multiple contacts with different domains of the 23S rRNA in the assembled 50S subunit and ribosome.</text>
</comment>
<comment type="function">
    <text evidence="1">Forms part of the polypeptide exit tunnel.</text>
</comment>
<comment type="subunit">
    <text evidence="1">Part of the 50S ribosomal subunit.</text>
</comment>
<comment type="similarity">
    <text evidence="1">Belongs to the universal ribosomal protein uL4 family.</text>
</comment>
<protein>
    <recommendedName>
        <fullName evidence="1">Large ribosomal subunit protein uL4</fullName>
    </recommendedName>
    <alternativeName>
        <fullName evidence="2">50S ribosomal protein L4</fullName>
    </alternativeName>
</protein>
<dbReference type="EMBL" id="CP001404">
    <property type="protein sequence ID" value="ACP48518.1"/>
    <property type="molecule type" value="Genomic_DNA"/>
</dbReference>
<dbReference type="SMR" id="C3NHA8"/>
<dbReference type="GeneID" id="7809819"/>
<dbReference type="KEGG" id="sin:YN1551_1427"/>
<dbReference type="HOGENOM" id="CLU_026535_0_0_2"/>
<dbReference type="Proteomes" id="UP000006818">
    <property type="component" value="Chromosome"/>
</dbReference>
<dbReference type="GO" id="GO:1990904">
    <property type="term" value="C:ribonucleoprotein complex"/>
    <property type="evidence" value="ECO:0007669"/>
    <property type="project" value="UniProtKB-KW"/>
</dbReference>
<dbReference type="GO" id="GO:0005840">
    <property type="term" value="C:ribosome"/>
    <property type="evidence" value="ECO:0007669"/>
    <property type="project" value="UniProtKB-KW"/>
</dbReference>
<dbReference type="GO" id="GO:0019843">
    <property type="term" value="F:rRNA binding"/>
    <property type="evidence" value="ECO:0007669"/>
    <property type="project" value="UniProtKB-UniRule"/>
</dbReference>
<dbReference type="GO" id="GO:0003735">
    <property type="term" value="F:structural constituent of ribosome"/>
    <property type="evidence" value="ECO:0007669"/>
    <property type="project" value="InterPro"/>
</dbReference>
<dbReference type="GO" id="GO:0006412">
    <property type="term" value="P:translation"/>
    <property type="evidence" value="ECO:0007669"/>
    <property type="project" value="UniProtKB-UniRule"/>
</dbReference>
<dbReference type="FunFam" id="3.40.1370.10:FF:000011">
    <property type="entry name" value="50S ribosomal protein L4"/>
    <property type="match status" value="1"/>
</dbReference>
<dbReference type="Gene3D" id="3.40.1370.10">
    <property type="match status" value="1"/>
</dbReference>
<dbReference type="HAMAP" id="MF_01328_A">
    <property type="entry name" value="Ribosomal_uL4_A"/>
    <property type="match status" value="1"/>
</dbReference>
<dbReference type="InterPro" id="IPR002136">
    <property type="entry name" value="Ribosomal_uL4"/>
</dbReference>
<dbReference type="InterPro" id="IPR023574">
    <property type="entry name" value="Ribosomal_uL4_dom_sf"/>
</dbReference>
<dbReference type="InterPro" id="IPR013000">
    <property type="entry name" value="Ribosomal_uL4_euk/arc_CS"/>
</dbReference>
<dbReference type="InterPro" id="IPR045240">
    <property type="entry name" value="Ribosomal_uL4_euk/arch"/>
</dbReference>
<dbReference type="InterPro" id="IPR019970">
    <property type="entry name" value="Ribosomall_uL4-arc"/>
</dbReference>
<dbReference type="NCBIfam" id="TIGR03672">
    <property type="entry name" value="rpl4p_arch"/>
    <property type="match status" value="1"/>
</dbReference>
<dbReference type="PANTHER" id="PTHR19431">
    <property type="entry name" value="60S RIBOSOMAL PROTEIN L4"/>
    <property type="match status" value="1"/>
</dbReference>
<dbReference type="Pfam" id="PF00573">
    <property type="entry name" value="Ribosomal_L4"/>
    <property type="match status" value="1"/>
</dbReference>
<dbReference type="SUPFAM" id="SSF52166">
    <property type="entry name" value="Ribosomal protein L4"/>
    <property type="match status" value="1"/>
</dbReference>
<dbReference type="PROSITE" id="PS00939">
    <property type="entry name" value="RIBOSOMAL_L1E"/>
    <property type="match status" value="1"/>
</dbReference>
<name>RL4_SACI1</name>
<evidence type="ECO:0000255" key="1">
    <source>
        <dbReference type="HAMAP-Rule" id="MF_01328"/>
    </source>
</evidence>
<evidence type="ECO:0000305" key="2"/>
<proteinExistence type="inferred from homology"/>
<accession>C3NHA8</accession>
<feature type="chain" id="PRO_1000214588" description="Large ribosomal subunit protein uL4">
    <location>
        <begin position="1"/>
        <end position="267"/>
    </location>
</feature>